<accession>Q8NGN7</accession>
<evidence type="ECO:0000255" key="1"/>
<evidence type="ECO:0000255" key="2">
    <source>
        <dbReference type="PROSITE-ProRule" id="PRU00521"/>
    </source>
</evidence>
<evidence type="ECO:0000305" key="3"/>
<name>O10D4_HUMAN</name>
<dbReference type="EMBL" id="AB065753">
    <property type="protein sequence ID" value="BAC05973.1"/>
    <property type="molecule type" value="Genomic_DNA"/>
</dbReference>
<dbReference type="SMR" id="Q8NGN7"/>
<dbReference type="FunCoup" id="Q8NGN7">
    <property type="interactions" value="636"/>
</dbReference>
<dbReference type="GlyCosmos" id="Q8NGN7">
    <property type="glycosylation" value="1 site, No reported glycans"/>
</dbReference>
<dbReference type="GlyGen" id="Q8NGN7">
    <property type="glycosylation" value="1 site"/>
</dbReference>
<dbReference type="BioMuta" id="HGNC:14770"/>
<dbReference type="DMDM" id="38372737"/>
<dbReference type="MassIVE" id="Q8NGN7"/>
<dbReference type="AGR" id="HGNC:14770"/>
<dbReference type="GeneCards" id="OR10D4P"/>
<dbReference type="HGNC" id="HGNC:14770">
    <property type="gene designation" value="OR10D4P"/>
</dbReference>
<dbReference type="neXtProt" id="NX_Q8NGN7"/>
<dbReference type="InParanoid" id="Q8NGN7"/>
<dbReference type="PAN-GO" id="Q8NGN7">
    <property type="GO annotations" value="1 GO annotation based on evolutionary models"/>
</dbReference>
<dbReference type="PhylomeDB" id="Q8NGN7"/>
<dbReference type="PathwayCommons" id="Q8NGN7"/>
<dbReference type="Pharos" id="Q8NGN7">
    <property type="development level" value="Tdark"/>
</dbReference>
<dbReference type="Proteomes" id="UP000005640">
    <property type="component" value="Unplaced"/>
</dbReference>
<dbReference type="RNAct" id="Q8NGN7">
    <property type="molecule type" value="protein"/>
</dbReference>
<dbReference type="GO" id="GO:0005886">
    <property type="term" value="C:plasma membrane"/>
    <property type="evidence" value="ECO:0000318"/>
    <property type="project" value="GO_Central"/>
</dbReference>
<dbReference type="GO" id="GO:0004930">
    <property type="term" value="F:G protein-coupled receptor activity"/>
    <property type="evidence" value="ECO:0007669"/>
    <property type="project" value="UniProtKB-KW"/>
</dbReference>
<dbReference type="GO" id="GO:0004984">
    <property type="term" value="F:olfactory receptor activity"/>
    <property type="evidence" value="ECO:0000318"/>
    <property type="project" value="GO_Central"/>
</dbReference>
<dbReference type="GO" id="GO:0050911">
    <property type="term" value="P:detection of chemical stimulus involved in sensory perception of smell"/>
    <property type="evidence" value="ECO:0000318"/>
    <property type="project" value="GO_Central"/>
</dbReference>
<dbReference type="CDD" id="cd15228">
    <property type="entry name" value="7tmA_OR10D-like"/>
    <property type="match status" value="1"/>
</dbReference>
<dbReference type="FunFam" id="1.10.1220.70:FF:000001">
    <property type="entry name" value="Olfactory receptor"/>
    <property type="match status" value="1"/>
</dbReference>
<dbReference type="FunFam" id="1.20.1070.10:FF:000001">
    <property type="entry name" value="Olfactory receptor"/>
    <property type="match status" value="1"/>
</dbReference>
<dbReference type="Gene3D" id="1.20.1070.10">
    <property type="entry name" value="Rhodopsin 7-helix transmembrane proteins"/>
    <property type="match status" value="1"/>
</dbReference>
<dbReference type="InterPro" id="IPR000276">
    <property type="entry name" value="GPCR_Rhodpsn"/>
</dbReference>
<dbReference type="InterPro" id="IPR017452">
    <property type="entry name" value="GPCR_Rhodpsn_7TM"/>
</dbReference>
<dbReference type="InterPro" id="IPR000725">
    <property type="entry name" value="Olfact_rcpt"/>
</dbReference>
<dbReference type="PANTHER" id="PTHR26453">
    <property type="entry name" value="OLFACTORY RECEPTOR"/>
    <property type="match status" value="1"/>
</dbReference>
<dbReference type="Pfam" id="PF13853">
    <property type="entry name" value="7tm_4"/>
    <property type="match status" value="1"/>
</dbReference>
<dbReference type="PRINTS" id="PR00237">
    <property type="entry name" value="GPCRRHODOPSN"/>
</dbReference>
<dbReference type="PRINTS" id="PR00245">
    <property type="entry name" value="OLFACTORYR"/>
</dbReference>
<dbReference type="SUPFAM" id="SSF81321">
    <property type="entry name" value="Family A G protein-coupled receptor-like"/>
    <property type="match status" value="1"/>
</dbReference>
<dbReference type="PROSITE" id="PS50262">
    <property type="entry name" value="G_PROTEIN_RECEP_F1_2"/>
    <property type="match status" value="1"/>
</dbReference>
<gene>
    <name type="primary">OR10D4P</name>
    <name type="synonym">OR10D4</name>
</gene>
<feature type="chain" id="PRO_0000150694" description="Putative olfactory receptor 10D4">
    <location>
        <begin position="1"/>
        <end position="298"/>
    </location>
</feature>
<feature type="topological domain" description="Extracellular" evidence="1">
    <location>
        <begin position="1"/>
        <end position="23"/>
    </location>
</feature>
<feature type="transmembrane region" description="Helical; Name=1" evidence="1">
    <location>
        <begin position="24"/>
        <end position="44"/>
    </location>
</feature>
<feature type="topological domain" description="Cytoplasmic" evidence="1">
    <location>
        <begin position="45"/>
        <end position="52"/>
    </location>
</feature>
<feature type="transmembrane region" description="Helical; Name=2" evidence="1">
    <location>
        <begin position="53"/>
        <end position="73"/>
    </location>
</feature>
<feature type="topological domain" description="Extracellular" evidence="1">
    <location>
        <begin position="74"/>
        <end position="97"/>
    </location>
</feature>
<feature type="transmembrane region" description="Helical; Name=3" evidence="1">
    <location>
        <begin position="98"/>
        <end position="118"/>
    </location>
</feature>
<feature type="topological domain" description="Cytoplasmic" evidence="1">
    <location>
        <begin position="119"/>
        <end position="137"/>
    </location>
</feature>
<feature type="transmembrane region" description="Helical; Name=4" evidence="1">
    <location>
        <begin position="138"/>
        <end position="158"/>
    </location>
</feature>
<feature type="topological domain" description="Extracellular" evidence="1">
    <location>
        <begin position="159"/>
        <end position="195"/>
    </location>
</feature>
<feature type="transmembrane region" description="Helical; Name=5" evidence="1">
    <location>
        <begin position="196"/>
        <end position="215"/>
    </location>
</feature>
<feature type="topological domain" description="Cytoplasmic" evidence="1">
    <location>
        <begin position="216"/>
        <end position="235"/>
    </location>
</feature>
<feature type="transmembrane region" description="Helical; Name=6" evidence="1">
    <location>
        <begin position="236"/>
        <end position="256"/>
    </location>
</feature>
<feature type="topological domain" description="Extracellular" evidence="1">
    <location>
        <begin position="257"/>
        <end position="267"/>
    </location>
</feature>
<feature type="transmembrane region" description="Helical; Name=7" evidence="1">
    <location>
        <begin position="268"/>
        <end position="288"/>
    </location>
</feature>
<feature type="topological domain" description="Cytoplasmic" evidence="1">
    <location>
        <begin position="289"/>
        <end position="298"/>
    </location>
</feature>
<feature type="glycosylation site" description="N-linked (GlcNAc...) asparagine" evidence="1">
    <location>
        <position position="3"/>
    </location>
</feature>
<feature type="disulfide bond" evidence="2">
    <location>
        <begin position="95"/>
        <end position="187"/>
    </location>
</feature>
<protein>
    <recommendedName>
        <fullName>Putative olfactory receptor 10D4</fullName>
    </recommendedName>
</protein>
<sequence length="298" mass="33107">MRNHTMVTEFILLGIPETEGLETALLFLFSSFYLCTLLGNVLILTAIISSTRLHTPMYFFLGNLSIFDLGFSSTTVPKMLFYLSGNSHAISYAGCVSQLFFYHFLGCTECFLYTVMACDRFVAICFPLRYTVIMNHRVCFMLATGTWMIGCVHAMILTPLTFQLPYCGPNKVGYYFCDIPAVLPLACKDTSLAQRVGFTNVGLLSLICFFLILVSYTCIGISISKIRSAEGRQRAFSTCSAHLTAILCAYGPVIVIYLQPNPSALLGSIIQILNNLVTPMLNPLIYSLRNKDVKSDQP</sequence>
<reference key="1">
    <citation type="submission" date="2001-07" db="EMBL/GenBank/DDBJ databases">
        <title>Genome-wide discovery and analysis of human seven transmembrane helix receptor genes.</title>
        <authorList>
            <person name="Suwa M."/>
            <person name="Sato T."/>
            <person name="Okouchi I."/>
            <person name="Arita M."/>
            <person name="Futami K."/>
            <person name="Matsumoto S."/>
            <person name="Tsutsumi S."/>
            <person name="Aburatani H."/>
            <person name="Asai K."/>
            <person name="Akiyama Y."/>
        </authorList>
    </citation>
    <scope>NUCLEOTIDE SEQUENCE [GENOMIC DNA]</scope>
</reference>
<comment type="function">
    <text evidence="3">Odorant receptor.</text>
</comment>
<comment type="subcellular location">
    <subcellularLocation>
        <location>Cell membrane</location>
        <topology>Multi-pass membrane protein</topology>
    </subcellularLocation>
</comment>
<comment type="similarity">
    <text evidence="2">Belongs to the G-protein coupled receptor 1 family.</text>
</comment>
<comment type="caution">
    <text evidence="3">Could be the product of a pseudogene.</text>
</comment>
<comment type="online information" name="Human Olfactory Receptor Data Exploratorium (HORDE)">
    <link uri="http://genome.weizmann.ac.il/horde/card/index/symbol:OR10D4P"/>
</comment>
<organism>
    <name type="scientific">Homo sapiens</name>
    <name type="common">Human</name>
    <dbReference type="NCBI Taxonomy" id="9606"/>
    <lineage>
        <taxon>Eukaryota</taxon>
        <taxon>Metazoa</taxon>
        <taxon>Chordata</taxon>
        <taxon>Craniata</taxon>
        <taxon>Vertebrata</taxon>
        <taxon>Euteleostomi</taxon>
        <taxon>Mammalia</taxon>
        <taxon>Eutheria</taxon>
        <taxon>Euarchontoglires</taxon>
        <taxon>Primates</taxon>
        <taxon>Haplorrhini</taxon>
        <taxon>Catarrhini</taxon>
        <taxon>Hominidae</taxon>
        <taxon>Homo</taxon>
    </lineage>
</organism>
<proteinExistence type="uncertain"/>
<keyword id="KW-1003">Cell membrane</keyword>
<keyword id="KW-1015">Disulfide bond</keyword>
<keyword id="KW-0297">G-protein coupled receptor</keyword>
<keyword id="KW-0325">Glycoprotein</keyword>
<keyword id="KW-0472">Membrane</keyword>
<keyword id="KW-0552">Olfaction</keyword>
<keyword id="KW-0675">Receptor</keyword>
<keyword id="KW-1185">Reference proteome</keyword>
<keyword id="KW-0716">Sensory transduction</keyword>
<keyword id="KW-0807">Transducer</keyword>
<keyword id="KW-0812">Transmembrane</keyword>
<keyword id="KW-1133">Transmembrane helix</keyword>